<name>PRMC_BUCBP</name>
<accession>Q89AT0</accession>
<reference key="1">
    <citation type="journal article" date="2003" name="Proc. Natl. Acad. Sci. U.S.A.">
        <title>Reductive genome evolution in Buchnera aphidicola.</title>
        <authorList>
            <person name="van Ham R.C.H.J."/>
            <person name="Kamerbeek J."/>
            <person name="Palacios C."/>
            <person name="Rausell C."/>
            <person name="Abascal F."/>
            <person name="Bastolla U."/>
            <person name="Fernandez J.M."/>
            <person name="Jimenez L."/>
            <person name="Postigo M."/>
            <person name="Silva F.J."/>
            <person name="Tamames J."/>
            <person name="Viguera E."/>
            <person name="Latorre A."/>
            <person name="Valencia A."/>
            <person name="Moran F."/>
            <person name="Moya A."/>
        </authorList>
    </citation>
    <scope>NUCLEOTIDE SEQUENCE [LARGE SCALE GENOMIC DNA]</scope>
    <source>
        <strain>Bp</strain>
    </source>
</reference>
<feature type="chain" id="PRO_0000157163" description="Release factor glutamine methyltransferase">
    <location>
        <begin position="1"/>
        <end position="277"/>
    </location>
</feature>
<feature type="binding site" evidence="1">
    <location>
        <begin position="119"/>
        <end position="123"/>
    </location>
    <ligand>
        <name>S-adenosyl-L-methionine</name>
        <dbReference type="ChEBI" id="CHEBI:59789"/>
    </ligand>
</feature>
<feature type="binding site" evidence="1">
    <location>
        <position position="142"/>
    </location>
    <ligand>
        <name>S-adenosyl-L-methionine</name>
        <dbReference type="ChEBI" id="CHEBI:59789"/>
    </ligand>
</feature>
<feature type="binding site" evidence="1">
    <location>
        <position position="170"/>
    </location>
    <ligand>
        <name>S-adenosyl-L-methionine</name>
        <dbReference type="ChEBI" id="CHEBI:59789"/>
    </ligand>
</feature>
<feature type="binding site" evidence="1">
    <location>
        <begin position="184"/>
        <end position="187"/>
    </location>
    <ligand>
        <name>substrate</name>
    </ligand>
</feature>
<feature type="binding site" evidence="1">
    <location>
        <position position="184"/>
    </location>
    <ligand>
        <name>S-adenosyl-L-methionine</name>
        <dbReference type="ChEBI" id="CHEBI:59789"/>
    </ligand>
</feature>
<sequence length="277" mass="31965">MKIKNWLKYASLKLKKTSSSPNLDAEILLSYVLKKCRTWIISNDFIKLTYDNLIDLNVLLQRRMNSEPISYLIHVKEFWSLPFLVSNSTLIPRPDTEILVEKALIYLKNLSNAKVLDLGTGCGSIALALASERLDCKIIGIDCVKESISIASKNAKILKLKNVSFLHSIWFSKVDNMFDMIVSNPPYLSFSEMKNVDKEVLFEPFIALFSSENGLGAIRHIIKYSKKYLYSKAWLLVEHGWKQKDKVQSFFYKYSFININTYRDYCDSDRVTVGQKQ</sequence>
<proteinExistence type="inferred from homology"/>
<gene>
    <name evidence="1" type="primary">prmC</name>
    <name type="synonym">hemK</name>
    <name type="ordered locus">bbp_162</name>
</gene>
<protein>
    <recommendedName>
        <fullName evidence="1">Release factor glutamine methyltransferase</fullName>
        <shortName evidence="1">RF MTase</shortName>
        <ecNumber evidence="1">2.1.1.297</ecNumber>
    </recommendedName>
    <alternativeName>
        <fullName evidence="1">N5-glutamine methyltransferase PrmC</fullName>
    </alternativeName>
    <alternativeName>
        <fullName evidence="1">Protein-(glutamine-N5) MTase PrmC</fullName>
    </alternativeName>
    <alternativeName>
        <fullName evidence="1">Protein-glutamine N-methyltransferase PrmC</fullName>
    </alternativeName>
</protein>
<evidence type="ECO:0000255" key="1">
    <source>
        <dbReference type="HAMAP-Rule" id="MF_02126"/>
    </source>
</evidence>
<dbReference type="EC" id="2.1.1.297" evidence="1"/>
<dbReference type="EMBL" id="AE016826">
    <property type="protein sequence ID" value="AAO26895.1"/>
    <property type="molecule type" value="Genomic_DNA"/>
</dbReference>
<dbReference type="RefSeq" id="WP_011091296.1">
    <property type="nucleotide sequence ID" value="NC_004545.1"/>
</dbReference>
<dbReference type="SMR" id="Q89AT0"/>
<dbReference type="STRING" id="224915.bbp_162"/>
<dbReference type="KEGG" id="bab:bbp_162"/>
<dbReference type="eggNOG" id="COG2890">
    <property type="taxonomic scope" value="Bacteria"/>
</dbReference>
<dbReference type="HOGENOM" id="CLU_018398_3_0_6"/>
<dbReference type="OrthoDB" id="9800643at2"/>
<dbReference type="Proteomes" id="UP000000601">
    <property type="component" value="Chromosome"/>
</dbReference>
<dbReference type="GO" id="GO:0003676">
    <property type="term" value="F:nucleic acid binding"/>
    <property type="evidence" value="ECO:0007669"/>
    <property type="project" value="InterPro"/>
</dbReference>
<dbReference type="GO" id="GO:0102559">
    <property type="term" value="F:protein-(glutamine-N5) methyltransferase activity"/>
    <property type="evidence" value="ECO:0007669"/>
    <property type="project" value="UniProtKB-EC"/>
</dbReference>
<dbReference type="GO" id="GO:0036009">
    <property type="term" value="F:protein-glutamine N-methyltransferase activity"/>
    <property type="evidence" value="ECO:0007669"/>
    <property type="project" value="UniProtKB-UniRule"/>
</dbReference>
<dbReference type="GO" id="GO:0032259">
    <property type="term" value="P:methylation"/>
    <property type="evidence" value="ECO:0007669"/>
    <property type="project" value="UniProtKB-KW"/>
</dbReference>
<dbReference type="CDD" id="cd02440">
    <property type="entry name" value="AdoMet_MTases"/>
    <property type="match status" value="1"/>
</dbReference>
<dbReference type="FunFam" id="3.40.50.150:FF:000053">
    <property type="entry name" value="Release factor glutamine methyltransferase"/>
    <property type="match status" value="1"/>
</dbReference>
<dbReference type="Gene3D" id="1.10.8.10">
    <property type="entry name" value="DNA helicase RuvA subunit, C-terminal domain"/>
    <property type="match status" value="1"/>
</dbReference>
<dbReference type="Gene3D" id="3.40.50.150">
    <property type="entry name" value="Vaccinia Virus protein VP39"/>
    <property type="match status" value="1"/>
</dbReference>
<dbReference type="HAMAP" id="MF_02126">
    <property type="entry name" value="RF_methyltr_PrmC"/>
    <property type="match status" value="1"/>
</dbReference>
<dbReference type="InterPro" id="IPR002052">
    <property type="entry name" value="DNA_methylase_N6_adenine_CS"/>
</dbReference>
<dbReference type="InterPro" id="IPR004556">
    <property type="entry name" value="HemK-like"/>
</dbReference>
<dbReference type="InterPro" id="IPR025714">
    <property type="entry name" value="Methyltranfer_dom"/>
</dbReference>
<dbReference type="InterPro" id="IPR050320">
    <property type="entry name" value="N5-glutamine_MTase"/>
</dbReference>
<dbReference type="InterPro" id="IPR040758">
    <property type="entry name" value="PrmC_N"/>
</dbReference>
<dbReference type="InterPro" id="IPR019874">
    <property type="entry name" value="RF_methyltr_PrmC"/>
</dbReference>
<dbReference type="InterPro" id="IPR029063">
    <property type="entry name" value="SAM-dependent_MTases_sf"/>
</dbReference>
<dbReference type="NCBIfam" id="TIGR00536">
    <property type="entry name" value="hemK_fam"/>
    <property type="match status" value="1"/>
</dbReference>
<dbReference type="NCBIfam" id="TIGR03534">
    <property type="entry name" value="RF_mod_PrmC"/>
    <property type="match status" value="1"/>
</dbReference>
<dbReference type="PANTHER" id="PTHR18895">
    <property type="entry name" value="HEMK METHYLTRANSFERASE"/>
    <property type="match status" value="1"/>
</dbReference>
<dbReference type="PANTHER" id="PTHR18895:SF74">
    <property type="entry name" value="MTRF1L RELEASE FACTOR GLUTAMINE METHYLTRANSFERASE"/>
    <property type="match status" value="1"/>
</dbReference>
<dbReference type="Pfam" id="PF13847">
    <property type="entry name" value="Methyltransf_31"/>
    <property type="match status" value="1"/>
</dbReference>
<dbReference type="Pfam" id="PF17827">
    <property type="entry name" value="PrmC_N"/>
    <property type="match status" value="1"/>
</dbReference>
<dbReference type="SUPFAM" id="SSF53335">
    <property type="entry name" value="S-adenosyl-L-methionine-dependent methyltransferases"/>
    <property type="match status" value="1"/>
</dbReference>
<keyword id="KW-0489">Methyltransferase</keyword>
<keyword id="KW-1185">Reference proteome</keyword>
<keyword id="KW-0949">S-adenosyl-L-methionine</keyword>
<keyword id="KW-0808">Transferase</keyword>
<comment type="function">
    <text evidence="1">Methylates the class 1 translation termination release factors RF1/PrfA and RF2/PrfB on the glutamine residue of the universally conserved GGQ motif.</text>
</comment>
<comment type="catalytic activity">
    <reaction evidence="1">
        <text>L-glutaminyl-[peptide chain release factor] + S-adenosyl-L-methionine = N(5)-methyl-L-glutaminyl-[peptide chain release factor] + S-adenosyl-L-homocysteine + H(+)</text>
        <dbReference type="Rhea" id="RHEA:42896"/>
        <dbReference type="Rhea" id="RHEA-COMP:10271"/>
        <dbReference type="Rhea" id="RHEA-COMP:10272"/>
        <dbReference type="ChEBI" id="CHEBI:15378"/>
        <dbReference type="ChEBI" id="CHEBI:30011"/>
        <dbReference type="ChEBI" id="CHEBI:57856"/>
        <dbReference type="ChEBI" id="CHEBI:59789"/>
        <dbReference type="ChEBI" id="CHEBI:61891"/>
        <dbReference type="EC" id="2.1.1.297"/>
    </reaction>
</comment>
<comment type="similarity">
    <text evidence="1">Belongs to the protein N5-glutamine methyltransferase family. PrmC subfamily.</text>
</comment>
<organism>
    <name type="scientific">Buchnera aphidicola subsp. Baizongia pistaciae (strain Bp)</name>
    <dbReference type="NCBI Taxonomy" id="224915"/>
    <lineage>
        <taxon>Bacteria</taxon>
        <taxon>Pseudomonadati</taxon>
        <taxon>Pseudomonadota</taxon>
        <taxon>Gammaproteobacteria</taxon>
        <taxon>Enterobacterales</taxon>
        <taxon>Erwiniaceae</taxon>
        <taxon>Buchnera</taxon>
    </lineage>
</organism>